<name>BIOD_BURA4</name>
<keyword id="KW-0067">ATP-binding</keyword>
<keyword id="KW-0093">Biotin biosynthesis</keyword>
<keyword id="KW-0963">Cytoplasm</keyword>
<keyword id="KW-0436">Ligase</keyword>
<keyword id="KW-0460">Magnesium</keyword>
<keyword id="KW-0479">Metal-binding</keyword>
<keyword id="KW-0547">Nucleotide-binding</keyword>
<dbReference type="EC" id="6.3.3.3" evidence="1"/>
<dbReference type="EMBL" id="CP001025">
    <property type="protein sequence ID" value="ACB65321.1"/>
    <property type="molecule type" value="Genomic_DNA"/>
</dbReference>
<dbReference type="RefSeq" id="WP_012364831.1">
    <property type="nucleotide sequence ID" value="NC_010551.1"/>
</dbReference>
<dbReference type="SMR" id="B1YNS1"/>
<dbReference type="KEGG" id="bac:BamMC406_2845"/>
<dbReference type="HOGENOM" id="CLU_072551_0_0_4"/>
<dbReference type="OrthoDB" id="9802097at2"/>
<dbReference type="UniPathway" id="UPA00078">
    <property type="reaction ID" value="UER00161"/>
</dbReference>
<dbReference type="Proteomes" id="UP000001680">
    <property type="component" value="Chromosome 1"/>
</dbReference>
<dbReference type="GO" id="GO:0005829">
    <property type="term" value="C:cytosol"/>
    <property type="evidence" value="ECO:0007669"/>
    <property type="project" value="TreeGrafter"/>
</dbReference>
<dbReference type="GO" id="GO:0005524">
    <property type="term" value="F:ATP binding"/>
    <property type="evidence" value="ECO:0007669"/>
    <property type="project" value="UniProtKB-UniRule"/>
</dbReference>
<dbReference type="GO" id="GO:0004141">
    <property type="term" value="F:dethiobiotin synthase activity"/>
    <property type="evidence" value="ECO:0007669"/>
    <property type="project" value="UniProtKB-UniRule"/>
</dbReference>
<dbReference type="GO" id="GO:0000287">
    <property type="term" value="F:magnesium ion binding"/>
    <property type="evidence" value="ECO:0007669"/>
    <property type="project" value="UniProtKB-UniRule"/>
</dbReference>
<dbReference type="GO" id="GO:0009102">
    <property type="term" value="P:biotin biosynthetic process"/>
    <property type="evidence" value="ECO:0007669"/>
    <property type="project" value="UniProtKB-UniRule"/>
</dbReference>
<dbReference type="CDD" id="cd03109">
    <property type="entry name" value="DTBS"/>
    <property type="match status" value="1"/>
</dbReference>
<dbReference type="FunFam" id="3.40.50.300:FF:000292">
    <property type="entry name" value="ATP-dependent dethiobiotin synthetase BioD"/>
    <property type="match status" value="1"/>
</dbReference>
<dbReference type="Gene3D" id="3.40.50.300">
    <property type="entry name" value="P-loop containing nucleotide triphosphate hydrolases"/>
    <property type="match status" value="1"/>
</dbReference>
<dbReference type="HAMAP" id="MF_00336">
    <property type="entry name" value="BioD"/>
    <property type="match status" value="1"/>
</dbReference>
<dbReference type="InterPro" id="IPR004472">
    <property type="entry name" value="DTB_synth_BioD"/>
</dbReference>
<dbReference type="InterPro" id="IPR027417">
    <property type="entry name" value="P-loop_NTPase"/>
</dbReference>
<dbReference type="NCBIfam" id="TIGR00347">
    <property type="entry name" value="bioD"/>
    <property type="match status" value="1"/>
</dbReference>
<dbReference type="PANTHER" id="PTHR43210">
    <property type="entry name" value="DETHIOBIOTIN SYNTHETASE"/>
    <property type="match status" value="1"/>
</dbReference>
<dbReference type="PANTHER" id="PTHR43210:SF5">
    <property type="entry name" value="DETHIOBIOTIN SYNTHETASE"/>
    <property type="match status" value="1"/>
</dbReference>
<dbReference type="Pfam" id="PF13500">
    <property type="entry name" value="AAA_26"/>
    <property type="match status" value="1"/>
</dbReference>
<dbReference type="PIRSF" id="PIRSF006755">
    <property type="entry name" value="DTB_synth"/>
    <property type="match status" value="1"/>
</dbReference>
<dbReference type="SUPFAM" id="SSF52540">
    <property type="entry name" value="P-loop containing nucleoside triphosphate hydrolases"/>
    <property type="match status" value="1"/>
</dbReference>
<comment type="function">
    <text evidence="1">Catalyzes a mechanistically unusual reaction, the ATP-dependent insertion of CO2 between the N7 and N8 nitrogen atoms of 7,8-diaminopelargonic acid (DAPA, also called 7,8-diammoniononanoate) to form a ureido ring.</text>
</comment>
<comment type="catalytic activity">
    <reaction evidence="1">
        <text>(7R,8S)-7,8-diammoniononanoate + CO2 + ATP = (4R,5S)-dethiobiotin + ADP + phosphate + 3 H(+)</text>
        <dbReference type="Rhea" id="RHEA:15805"/>
        <dbReference type="ChEBI" id="CHEBI:15378"/>
        <dbReference type="ChEBI" id="CHEBI:16526"/>
        <dbReference type="ChEBI" id="CHEBI:30616"/>
        <dbReference type="ChEBI" id="CHEBI:43474"/>
        <dbReference type="ChEBI" id="CHEBI:149469"/>
        <dbReference type="ChEBI" id="CHEBI:149473"/>
        <dbReference type="ChEBI" id="CHEBI:456216"/>
        <dbReference type="EC" id="6.3.3.3"/>
    </reaction>
</comment>
<comment type="cofactor">
    <cofactor evidence="1">
        <name>Mg(2+)</name>
        <dbReference type="ChEBI" id="CHEBI:18420"/>
    </cofactor>
</comment>
<comment type="pathway">
    <text evidence="1">Cofactor biosynthesis; biotin biosynthesis; biotin from 7,8-diaminononanoate: step 1/2.</text>
</comment>
<comment type="subunit">
    <text evidence="1">Homodimer.</text>
</comment>
<comment type="subcellular location">
    <subcellularLocation>
        <location evidence="1">Cytoplasm</location>
    </subcellularLocation>
</comment>
<comment type="similarity">
    <text evidence="1">Belongs to the dethiobiotin synthetase family.</text>
</comment>
<reference key="1">
    <citation type="submission" date="2008-04" db="EMBL/GenBank/DDBJ databases">
        <title>Complete sequence of chromosome 1 of Burkholderia ambifaria MC40-6.</title>
        <authorList>
            <person name="Copeland A."/>
            <person name="Lucas S."/>
            <person name="Lapidus A."/>
            <person name="Glavina del Rio T."/>
            <person name="Dalin E."/>
            <person name="Tice H."/>
            <person name="Pitluck S."/>
            <person name="Chain P."/>
            <person name="Malfatti S."/>
            <person name="Shin M."/>
            <person name="Vergez L."/>
            <person name="Lang D."/>
            <person name="Schmutz J."/>
            <person name="Larimer F."/>
            <person name="Land M."/>
            <person name="Hauser L."/>
            <person name="Kyrpides N."/>
            <person name="Lykidis A."/>
            <person name="Ramette A."/>
            <person name="Konstantinidis K."/>
            <person name="Tiedje J."/>
            <person name="Richardson P."/>
        </authorList>
    </citation>
    <scope>NUCLEOTIDE SEQUENCE [LARGE SCALE GENOMIC DNA]</scope>
    <source>
        <strain>MC40-6</strain>
    </source>
</reference>
<proteinExistence type="inferred from homology"/>
<feature type="chain" id="PRO_1000119860" description="ATP-dependent dethiobiotin synthetase BioD">
    <location>
        <begin position="1"/>
        <end position="239"/>
    </location>
</feature>
<feature type="active site" evidence="1">
    <location>
        <position position="40"/>
    </location>
</feature>
<feature type="binding site" evidence="1">
    <location>
        <begin position="15"/>
        <end position="20"/>
    </location>
    <ligand>
        <name>ATP</name>
        <dbReference type="ChEBI" id="CHEBI:30616"/>
    </ligand>
</feature>
<feature type="binding site" evidence="1">
    <location>
        <position position="19"/>
    </location>
    <ligand>
        <name>Mg(2+)</name>
        <dbReference type="ChEBI" id="CHEBI:18420"/>
    </ligand>
</feature>
<feature type="binding site" evidence="1">
    <location>
        <position position="57"/>
    </location>
    <ligand>
        <name>ATP</name>
        <dbReference type="ChEBI" id="CHEBI:30616"/>
    </ligand>
</feature>
<feature type="binding site" evidence="1">
    <location>
        <position position="57"/>
    </location>
    <ligand>
        <name>Mg(2+)</name>
        <dbReference type="ChEBI" id="CHEBI:18420"/>
    </ligand>
</feature>
<feature type="binding site" evidence="1">
    <location>
        <begin position="118"/>
        <end position="121"/>
    </location>
    <ligand>
        <name>ATP</name>
        <dbReference type="ChEBI" id="CHEBI:30616"/>
    </ligand>
</feature>
<feature type="binding site" evidence="1">
    <location>
        <position position="118"/>
    </location>
    <ligand>
        <name>Mg(2+)</name>
        <dbReference type="ChEBI" id="CHEBI:18420"/>
    </ligand>
</feature>
<feature type="binding site" evidence="1">
    <location>
        <begin position="178"/>
        <end position="179"/>
    </location>
    <ligand>
        <name>ATP</name>
        <dbReference type="ChEBI" id="CHEBI:30616"/>
    </ligand>
</feature>
<feature type="binding site" evidence="1">
    <location>
        <begin position="211"/>
        <end position="213"/>
    </location>
    <ligand>
        <name>ATP</name>
        <dbReference type="ChEBI" id="CHEBI:30616"/>
    </ligand>
</feature>
<organism>
    <name type="scientific">Burkholderia ambifaria (strain MC40-6)</name>
    <dbReference type="NCBI Taxonomy" id="398577"/>
    <lineage>
        <taxon>Bacteria</taxon>
        <taxon>Pseudomonadati</taxon>
        <taxon>Pseudomonadota</taxon>
        <taxon>Betaproteobacteria</taxon>
        <taxon>Burkholderiales</taxon>
        <taxon>Burkholderiaceae</taxon>
        <taxon>Burkholderia</taxon>
        <taxon>Burkholderia cepacia complex</taxon>
    </lineage>
</organism>
<protein>
    <recommendedName>
        <fullName evidence="1">ATP-dependent dethiobiotin synthetase BioD</fullName>
        <ecNumber evidence="1">6.3.3.3</ecNumber>
    </recommendedName>
    <alternativeName>
        <fullName evidence="1">DTB synthetase</fullName>
        <shortName evidence="1">DTBS</shortName>
    </alternativeName>
    <alternativeName>
        <fullName evidence="1">Dethiobiotin synthase</fullName>
    </alternativeName>
</protein>
<gene>
    <name evidence="1" type="primary">bioD</name>
    <name type="ordered locus">BamMC406_2845</name>
</gene>
<evidence type="ECO:0000255" key="1">
    <source>
        <dbReference type="HAMAP-Rule" id="MF_00336"/>
    </source>
</evidence>
<sequence length="239" mass="25248">MTAPLSLFVTGTDTEIGKTFVSAAMLHGFARHGLRAAALKPVAAGAYERDGVWRNEDADQLDAAANVVLPPELRTPFLLKAPAAPHIVAAQEGVTLDIDTIVASHREALTRADVVVVEGVGGFRVPLTDTQDTADLAVALGLPVVLVVGVRLGCISHALLTADAITARGLRIAGWVANHVDPAMSYADENVATIRDWLAREHRAPLLGRIAHLRPAIPESAAAMLDIAALVDTLRRAQH</sequence>
<accession>B1YNS1</accession>